<organism>
    <name type="scientific">Schizosaccharomyces pombe (strain 972 / ATCC 24843)</name>
    <name type="common">Fission yeast</name>
    <dbReference type="NCBI Taxonomy" id="284812"/>
    <lineage>
        <taxon>Eukaryota</taxon>
        <taxon>Fungi</taxon>
        <taxon>Dikarya</taxon>
        <taxon>Ascomycota</taxon>
        <taxon>Taphrinomycotina</taxon>
        <taxon>Schizosaccharomycetes</taxon>
        <taxon>Schizosaccharomycetales</taxon>
        <taxon>Schizosaccharomycetaceae</taxon>
        <taxon>Schizosaccharomyces</taxon>
    </lineage>
</organism>
<protein>
    <recommendedName>
        <fullName>Protein HGH1 homolog</fullName>
    </recommendedName>
</protein>
<keyword id="KW-1185">Reference proteome</keyword>
<reference key="1">
    <citation type="journal article" date="2002" name="Nature">
        <title>The genome sequence of Schizosaccharomyces pombe.</title>
        <authorList>
            <person name="Wood V."/>
            <person name="Gwilliam R."/>
            <person name="Rajandream M.A."/>
            <person name="Lyne M.H."/>
            <person name="Lyne R."/>
            <person name="Stewart A."/>
            <person name="Sgouros J.G."/>
            <person name="Peat N."/>
            <person name="Hayles J."/>
            <person name="Baker S.G."/>
            <person name="Basham D."/>
            <person name="Bowman S."/>
            <person name="Brooks K."/>
            <person name="Brown D."/>
            <person name="Brown S."/>
            <person name="Chillingworth T."/>
            <person name="Churcher C.M."/>
            <person name="Collins M."/>
            <person name="Connor R."/>
            <person name="Cronin A."/>
            <person name="Davis P."/>
            <person name="Feltwell T."/>
            <person name="Fraser A."/>
            <person name="Gentles S."/>
            <person name="Goble A."/>
            <person name="Hamlin N."/>
            <person name="Harris D.E."/>
            <person name="Hidalgo J."/>
            <person name="Hodgson G."/>
            <person name="Holroyd S."/>
            <person name="Hornsby T."/>
            <person name="Howarth S."/>
            <person name="Huckle E.J."/>
            <person name="Hunt S."/>
            <person name="Jagels K."/>
            <person name="James K.D."/>
            <person name="Jones L."/>
            <person name="Jones M."/>
            <person name="Leather S."/>
            <person name="McDonald S."/>
            <person name="McLean J."/>
            <person name="Mooney P."/>
            <person name="Moule S."/>
            <person name="Mungall K.L."/>
            <person name="Murphy L.D."/>
            <person name="Niblett D."/>
            <person name="Odell C."/>
            <person name="Oliver K."/>
            <person name="O'Neil S."/>
            <person name="Pearson D."/>
            <person name="Quail M.A."/>
            <person name="Rabbinowitsch E."/>
            <person name="Rutherford K.M."/>
            <person name="Rutter S."/>
            <person name="Saunders D."/>
            <person name="Seeger K."/>
            <person name="Sharp S."/>
            <person name="Skelton J."/>
            <person name="Simmonds M.N."/>
            <person name="Squares R."/>
            <person name="Squares S."/>
            <person name="Stevens K."/>
            <person name="Taylor K."/>
            <person name="Taylor R.G."/>
            <person name="Tivey A."/>
            <person name="Walsh S.V."/>
            <person name="Warren T."/>
            <person name="Whitehead S."/>
            <person name="Woodward J.R."/>
            <person name="Volckaert G."/>
            <person name="Aert R."/>
            <person name="Robben J."/>
            <person name="Grymonprez B."/>
            <person name="Weltjens I."/>
            <person name="Vanstreels E."/>
            <person name="Rieger M."/>
            <person name="Schaefer M."/>
            <person name="Mueller-Auer S."/>
            <person name="Gabel C."/>
            <person name="Fuchs M."/>
            <person name="Duesterhoeft A."/>
            <person name="Fritzc C."/>
            <person name="Holzer E."/>
            <person name="Moestl D."/>
            <person name="Hilbert H."/>
            <person name="Borzym K."/>
            <person name="Langer I."/>
            <person name="Beck A."/>
            <person name="Lehrach H."/>
            <person name="Reinhardt R."/>
            <person name="Pohl T.M."/>
            <person name="Eger P."/>
            <person name="Zimmermann W."/>
            <person name="Wedler H."/>
            <person name="Wambutt R."/>
            <person name="Purnelle B."/>
            <person name="Goffeau A."/>
            <person name="Cadieu E."/>
            <person name="Dreano S."/>
            <person name="Gloux S."/>
            <person name="Lelaure V."/>
            <person name="Mottier S."/>
            <person name="Galibert F."/>
            <person name="Aves S.J."/>
            <person name="Xiang Z."/>
            <person name="Hunt C."/>
            <person name="Moore K."/>
            <person name="Hurst S.M."/>
            <person name="Lucas M."/>
            <person name="Rochet M."/>
            <person name="Gaillardin C."/>
            <person name="Tallada V.A."/>
            <person name="Garzon A."/>
            <person name="Thode G."/>
            <person name="Daga R.R."/>
            <person name="Cruzado L."/>
            <person name="Jimenez J."/>
            <person name="Sanchez M."/>
            <person name="del Rey F."/>
            <person name="Benito J."/>
            <person name="Dominguez A."/>
            <person name="Revuelta J.L."/>
            <person name="Moreno S."/>
            <person name="Armstrong J."/>
            <person name="Forsburg S.L."/>
            <person name="Cerutti L."/>
            <person name="Lowe T."/>
            <person name="McCombie W.R."/>
            <person name="Paulsen I."/>
            <person name="Potashkin J."/>
            <person name="Shpakovski G.V."/>
            <person name="Ussery D."/>
            <person name="Barrell B.G."/>
            <person name="Nurse P."/>
        </authorList>
    </citation>
    <scope>NUCLEOTIDE SEQUENCE [LARGE SCALE GENOMIC DNA]</scope>
    <source>
        <strain>972 / ATCC 24843</strain>
    </source>
</reference>
<gene>
    <name type="primary">hgh1</name>
    <name type="ORF">SPAC26F1.12c</name>
</gene>
<comment type="similarity">
    <text evidence="1">Belongs to the HGH1 family.</text>
</comment>
<evidence type="ECO:0000305" key="1"/>
<sequence>MSELIELVGFLHDQNPQVRMLAVQHLLPYTARNHPQFSIWFHNDFEPVKDLKALLKDKPQIASQAVTALVNVSQNEKVRKVLMDDEFLQLIFSIVTNPLHGLADLSCMLLCNLAKEEDFARILDMQVPLREFSLSKNIIDQLMDLFVKGTDHGINEYANFDFLANVFADMTRFERGRKYFTTLQEYDHVIPASKLVVFTEHKSLLRRTGVAAIIKNISFDIPFQKVLMDEEGINVLPYLLLPLAGPEELSEEDMDGMFDELQLLPDDKKREPDHFIMKTLVETLVLLTATREGREHMRRRKVYPIIRELHLNVDDEEIREVCDQLVQMLVRDEAPEELEHIQDNPPDEDDVIVEVD</sequence>
<proteinExistence type="inferred from homology"/>
<feature type="chain" id="PRO_0000116624" description="Protein HGH1 homolog">
    <location>
        <begin position="1"/>
        <end position="356"/>
    </location>
</feature>
<name>HGH1_SCHPO</name>
<dbReference type="EMBL" id="CU329670">
    <property type="protein sequence ID" value="CAA97369.1"/>
    <property type="molecule type" value="Genomic_DNA"/>
</dbReference>
<dbReference type="PIR" id="T38408">
    <property type="entry name" value="T38408"/>
</dbReference>
<dbReference type="RefSeq" id="NP_594883.1">
    <property type="nucleotide sequence ID" value="NM_001020312.2"/>
</dbReference>
<dbReference type="SMR" id="Q10498"/>
<dbReference type="BioGRID" id="279128">
    <property type="interactions" value="2"/>
</dbReference>
<dbReference type="FunCoup" id="Q10498">
    <property type="interactions" value="649"/>
</dbReference>
<dbReference type="STRING" id="284812.Q10498"/>
<dbReference type="iPTMnet" id="Q10498"/>
<dbReference type="PaxDb" id="4896-SPAC26F1.12c.1"/>
<dbReference type="EnsemblFungi" id="SPAC26F1.12c.1">
    <property type="protein sequence ID" value="SPAC26F1.12c.1:pep"/>
    <property type="gene ID" value="SPAC26F1.12c"/>
</dbReference>
<dbReference type="GeneID" id="2542675"/>
<dbReference type="KEGG" id="spo:2542675"/>
<dbReference type="PomBase" id="SPAC26F1.12c">
    <property type="gene designation" value="hgh1"/>
</dbReference>
<dbReference type="VEuPathDB" id="FungiDB:SPAC26F1.12c"/>
<dbReference type="eggNOG" id="KOG2973">
    <property type="taxonomic scope" value="Eukaryota"/>
</dbReference>
<dbReference type="HOGENOM" id="CLU_037769_2_1_1"/>
<dbReference type="InParanoid" id="Q10498"/>
<dbReference type="OMA" id="MCILLTN"/>
<dbReference type="PhylomeDB" id="Q10498"/>
<dbReference type="PRO" id="PR:Q10498"/>
<dbReference type="Proteomes" id="UP000002485">
    <property type="component" value="Chromosome I"/>
</dbReference>
<dbReference type="GO" id="GO:0005737">
    <property type="term" value="C:cytoplasm"/>
    <property type="evidence" value="ECO:0000266"/>
    <property type="project" value="PomBase"/>
</dbReference>
<dbReference type="GO" id="GO:0005634">
    <property type="term" value="C:nucleus"/>
    <property type="evidence" value="ECO:0000266"/>
    <property type="project" value="PomBase"/>
</dbReference>
<dbReference type="GO" id="GO:0044183">
    <property type="term" value="F:protein folding chaperone"/>
    <property type="evidence" value="ECO:0000266"/>
    <property type="project" value="PomBase"/>
</dbReference>
<dbReference type="GO" id="GO:0061077">
    <property type="term" value="P:chaperone-mediated protein folding"/>
    <property type="evidence" value="ECO:0000266"/>
    <property type="project" value="PomBase"/>
</dbReference>
<dbReference type="Gene3D" id="1.25.10.10">
    <property type="entry name" value="Leucine-rich Repeat Variant"/>
    <property type="match status" value="1"/>
</dbReference>
<dbReference type="InterPro" id="IPR011989">
    <property type="entry name" value="ARM-like"/>
</dbReference>
<dbReference type="InterPro" id="IPR016024">
    <property type="entry name" value="ARM-type_fold"/>
</dbReference>
<dbReference type="InterPro" id="IPR039717">
    <property type="entry name" value="Hgh1"/>
</dbReference>
<dbReference type="InterPro" id="IPR007206">
    <property type="entry name" value="Protein_HGH1_C"/>
</dbReference>
<dbReference type="InterPro" id="IPR007205">
    <property type="entry name" value="Protein_HGH1_N"/>
</dbReference>
<dbReference type="PANTHER" id="PTHR13387">
    <property type="entry name" value="PROTEIN HGH1 HOMOLOG"/>
    <property type="match status" value="1"/>
</dbReference>
<dbReference type="PANTHER" id="PTHR13387:SF9">
    <property type="entry name" value="PROTEIN HGH1 HOMOLOG"/>
    <property type="match status" value="1"/>
</dbReference>
<dbReference type="Pfam" id="PF04063">
    <property type="entry name" value="DUF383"/>
    <property type="match status" value="1"/>
</dbReference>
<dbReference type="Pfam" id="PF04064">
    <property type="entry name" value="DUF384"/>
    <property type="match status" value="1"/>
</dbReference>
<dbReference type="SUPFAM" id="SSF48371">
    <property type="entry name" value="ARM repeat"/>
    <property type="match status" value="1"/>
</dbReference>
<accession>Q10498</accession>